<comment type="function">
    <text evidence="1">Binds directly to 23S ribosomal RNA and is necessary for the in vitro assembly process of the 50S ribosomal subunit. It is not involved in the protein synthesizing functions of that subunit.</text>
</comment>
<comment type="similarity">
    <text evidence="1">Belongs to the bacterial ribosomal protein bL20 family.</text>
</comment>
<reference key="1">
    <citation type="journal article" date="2009" name="PLoS Genet.">
        <title>Adaptations to submarine hydrothermal environments exemplified by the genome of Nautilia profundicola.</title>
        <authorList>
            <person name="Campbell B.J."/>
            <person name="Smith J.L."/>
            <person name="Hanson T.E."/>
            <person name="Klotz M.G."/>
            <person name="Stein L.Y."/>
            <person name="Lee C.K."/>
            <person name="Wu D."/>
            <person name="Robinson J.M."/>
            <person name="Khouri H.M."/>
            <person name="Eisen J.A."/>
            <person name="Cary S.C."/>
        </authorList>
    </citation>
    <scope>NUCLEOTIDE SEQUENCE [LARGE SCALE GENOMIC DNA]</scope>
    <source>
        <strain>ATCC BAA-1463 / DSM 18972 / AmH</strain>
    </source>
</reference>
<protein>
    <recommendedName>
        <fullName evidence="1">Large ribosomal subunit protein bL20</fullName>
    </recommendedName>
    <alternativeName>
        <fullName evidence="2">50S ribosomal protein L20</fullName>
    </alternativeName>
</protein>
<dbReference type="EMBL" id="CP001279">
    <property type="protein sequence ID" value="ACM93089.1"/>
    <property type="molecule type" value="Genomic_DNA"/>
</dbReference>
<dbReference type="RefSeq" id="WP_015902141.1">
    <property type="nucleotide sequence ID" value="NC_012115.1"/>
</dbReference>
<dbReference type="SMR" id="B9L884"/>
<dbReference type="STRING" id="598659.NAMH_0420"/>
<dbReference type="KEGG" id="nam:NAMH_0420"/>
<dbReference type="eggNOG" id="COG0292">
    <property type="taxonomic scope" value="Bacteria"/>
</dbReference>
<dbReference type="HOGENOM" id="CLU_123265_0_1_7"/>
<dbReference type="OrthoDB" id="9808966at2"/>
<dbReference type="Proteomes" id="UP000000448">
    <property type="component" value="Chromosome"/>
</dbReference>
<dbReference type="GO" id="GO:1990904">
    <property type="term" value="C:ribonucleoprotein complex"/>
    <property type="evidence" value="ECO:0007669"/>
    <property type="project" value="UniProtKB-KW"/>
</dbReference>
<dbReference type="GO" id="GO:0005840">
    <property type="term" value="C:ribosome"/>
    <property type="evidence" value="ECO:0007669"/>
    <property type="project" value="UniProtKB-KW"/>
</dbReference>
<dbReference type="GO" id="GO:0019843">
    <property type="term" value="F:rRNA binding"/>
    <property type="evidence" value="ECO:0007669"/>
    <property type="project" value="UniProtKB-UniRule"/>
</dbReference>
<dbReference type="GO" id="GO:0003735">
    <property type="term" value="F:structural constituent of ribosome"/>
    <property type="evidence" value="ECO:0007669"/>
    <property type="project" value="InterPro"/>
</dbReference>
<dbReference type="GO" id="GO:0000027">
    <property type="term" value="P:ribosomal large subunit assembly"/>
    <property type="evidence" value="ECO:0007669"/>
    <property type="project" value="UniProtKB-UniRule"/>
</dbReference>
<dbReference type="GO" id="GO:0006412">
    <property type="term" value="P:translation"/>
    <property type="evidence" value="ECO:0007669"/>
    <property type="project" value="InterPro"/>
</dbReference>
<dbReference type="CDD" id="cd07026">
    <property type="entry name" value="Ribosomal_L20"/>
    <property type="match status" value="1"/>
</dbReference>
<dbReference type="FunFam" id="1.10.1900.20:FF:000001">
    <property type="entry name" value="50S ribosomal protein L20"/>
    <property type="match status" value="1"/>
</dbReference>
<dbReference type="Gene3D" id="6.10.160.10">
    <property type="match status" value="1"/>
</dbReference>
<dbReference type="Gene3D" id="1.10.1900.20">
    <property type="entry name" value="Ribosomal protein L20"/>
    <property type="match status" value="1"/>
</dbReference>
<dbReference type="HAMAP" id="MF_00382">
    <property type="entry name" value="Ribosomal_bL20"/>
    <property type="match status" value="1"/>
</dbReference>
<dbReference type="InterPro" id="IPR005813">
    <property type="entry name" value="Ribosomal_bL20"/>
</dbReference>
<dbReference type="InterPro" id="IPR049946">
    <property type="entry name" value="RIBOSOMAL_L20_CS"/>
</dbReference>
<dbReference type="InterPro" id="IPR035566">
    <property type="entry name" value="Ribosomal_protein_bL20_C"/>
</dbReference>
<dbReference type="NCBIfam" id="TIGR01032">
    <property type="entry name" value="rplT_bact"/>
    <property type="match status" value="1"/>
</dbReference>
<dbReference type="PANTHER" id="PTHR10986">
    <property type="entry name" value="39S RIBOSOMAL PROTEIN L20"/>
    <property type="match status" value="1"/>
</dbReference>
<dbReference type="Pfam" id="PF00453">
    <property type="entry name" value="Ribosomal_L20"/>
    <property type="match status" value="1"/>
</dbReference>
<dbReference type="PRINTS" id="PR00062">
    <property type="entry name" value="RIBOSOMALL20"/>
</dbReference>
<dbReference type="SUPFAM" id="SSF74731">
    <property type="entry name" value="Ribosomal protein L20"/>
    <property type="match status" value="1"/>
</dbReference>
<dbReference type="PROSITE" id="PS00937">
    <property type="entry name" value="RIBOSOMAL_L20"/>
    <property type="match status" value="1"/>
</dbReference>
<proteinExistence type="inferred from homology"/>
<name>RL20_NAUPA</name>
<gene>
    <name evidence="1" type="primary">rplT</name>
    <name type="ordered locus">NAMH_0420</name>
</gene>
<feature type="chain" id="PRO_1000193971" description="Large ribosomal subunit protein bL20">
    <location>
        <begin position="1"/>
        <end position="116"/>
    </location>
</feature>
<sequence>MRVKTGTVRRKRHKKILKMAKGFYSGRRKHFRKAKEQVERSLVYAFRDRKQKKRDFRKLWIIRINAACRLNDISYSRFINGLKKANIDLDRKILADLAMNEPEVFAQIVEKAKAAL</sequence>
<accession>B9L884</accession>
<organism>
    <name type="scientific">Nautilia profundicola (strain ATCC BAA-1463 / DSM 18972 / AmH)</name>
    <dbReference type="NCBI Taxonomy" id="598659"/>
    <lineage>
        <taxon>Bacteria</taxon>
        <taxon>Pseudomonadati</taxon>
        <taxon>Campylobacterota</taxon>
        <taxon>Epsilonproteobacteria</taxon>
        <taxon>Nautiliales</taxon>
        <taxon>Nautiliaceae</taxon>
        <taxon>Nautilia</taxon>
    </lineage>
</organism>
<keyword id="KW-0687">Ribonucleoprotein</keyword>
<keyword id="KW-0689">Ribosomal protein</keyword>
<keyword id="KW-0694">RNA-binding</keyword>
<keyword id="KW-0699">rRNA-binding</keyword>
<evidence type="ECO:0000255" key="1">
    <source>
        <dbReference type="HAMAP-Rule" id="MF_00382"/>
    </source>
</evidence>
<evidence type="ECO:0000305" key="2"/>